<name>ZRAS_ECO57</name>
<dbReference type="EC" id="2.7.13.3" evidence="1"/>
<dbReference type="EMBL" id="AE005174">
    <property type="protein sequence ID" value="AAG59200.1"/>
    <property type="molecule type" value="Genomic_DNA"/>
</dbReference>
<dbReference type="EMBL" id="BA000007">
    <property type="protein sequence ID" value="BAB38349.1"/>
    <property type="molecule type" value="Genomic_DNA"/>
</dbReference>
<dbReference type="PIR" id="D86092">
    <property type="entry name" value="D86092"/>
</dbReference>
<dbReference type="PIR" id="F91244">
    <property type="entry name" value="F91244"/>
</dbReference>
<dbReference type="RefSeq" id="NP_312953.1">
    <property type="nucleotide sequence ID" value="NC_002695.1"/>
</dbReference>
<dbReference type="RefSeq" id="WP_001211936.1">
    <property type="nucleotide sequence ID" value="NZ_VOAI01000037.1"/>
</dbReference>
<dbReference type="SMR" id="Q8X614"/>
<dbReference type="STRING" id="155864.Z5579"/>
<dbReference type="GeneID" id="916224"/>
<dbReference type="KEGG" id="ece:Z5579"/>
<dbReference type="KEGG" id="ecs:ECs_4926"/>
<dbReference type="PATRIC" id="fig|386585.9.peg.5152"/>
<dbReference type="eggNOG" id="COG4191">
    <property type="taxonomic scope" value="Bacteria"/>
</dbReference>
<dbReference type="HOGENOM" id="CLU_000445_89_29_6"/>
<dbReference type="OMA" id="LAQFWFR"/>
<dbReference type="BRENDA" id="2.7.13.3">
    <property type="organism ID" value="2026"/>
</dbReference>
<dbReference type="Proteomes" id="UP000000558">
    <property type="component" value="Chromosome"/>
</dbReference>
<dbReference type="Proteomes" id="UP000002519">
    <property type="component" value="Chromosome"/>
</dbReference>
<dbReference type="GO" id="GO:0005886">
    <property type="term" value="C:plasma membrane"/>
    <property type="evidence" value="ECO:0007669"/>
    <property type="project" value="UniProtKB-SubCell"/>
</dbReference>
<dbReference type="GO" id="GO:0005524">
    <property type="term" value="F:ATP binding"/>
    <property type="evidence" value="ECO:0007669"/>
    <property type="project" value="UniProtKB-KW"/>
</dbReference>
<dbReference type="GO" id="GO:0000155">
    <property type="term" value="F:phosphorelay sensor kinase activity"/>
    <property type="evidence" value="ECO:0007669"/>
    <property type="project" value="InterPro"/>
</dbReference>
<dbReference type="CDD" id="cd00082">
    <property type="entry name" value="HisKA"/>
    <property type="match status" value="1"/>
</dbReference>
<dbReference type="FunFam" id="1.10.287.130:FF:000099">
    <property type="entry name" value="Two-component sensor histidine kinase"/>
    <property type="match status" value="1"/>
</dbReference>
<dbReference type="Gene3D" id="1.10.287.130">
    <property type="match status" value="1"/>
</dbReference>
<dbReference type="Gene3D" id="3.30.565.10">
    <property type="entry name" value="Histidine kinase-like ATPase, C-terminal domain"/>
    <property type="match status" value="1"/>
</dbReference>
<dbReference type="InterPro" id="IPR036890">
    <property type="entry name" value="HATPase_C_sf"/>
</dbReference>
<dbReference type="InterPro" id="IPR005467">
    <property type="entry name" value="His_kinase_dom"/>
</dbReference>
<dbReference type="InterPro" id="IPR003661">
    <property type="entry name" value="HisK_dim/P_dom"/>
</dbReference>
<dbReference type="InterPro" id="IPR036097">
    <property type="entry name" value="HisK_dim/P_sf"/>
</dbReference>
<dbReference type="InterPro" id="IPR029151">
    <property type="entry name" value="Sensor-like_sf"/>
</dbReference>
<dbReference type="InterPro" id="IPR004358">
    <property type="entry name" value="Sig_transdc_His_kin-like_C"/>
</dbReference>
<dbReference type="NCBIfam" id="NF007688">
    <property type="entry name" value="PRK10364.1"/>
    <property type="match status" value="1"/>
</dbReference>
<dbReference type="PANTHER" id="PTHR43065">
    <property type="entry name" value="SENSOR HISTIDINE KINASE"/>
    <property type="match status" value="1"/>
</dbReference>
<dbReference type="PANTHER" id="PTHR43065:SF54">
    <property type="entry name" value="SENSOR PROTEIN ZRAS"/>
    <property type="match status" value="1"/>
</dbReference>
<dbReference type="Pfam" id="PF02518">
    <property type="entry name" value="HATPase_c"/>
    <property type="match status" value="1"/>
</dbReference>
<dbReference type="Pfam" id="PF00512">
    <property type="entry name" value="HisKA"/>
    <property type="match status" value="1"/>
</dbReference>
<dbReference type="PRINTS" id="PR00344">
    <property type="entry name" value="BCTRLSENSOR"/>
</dbReference>
<dbReference type="SMART" id="SM00387">
    <property type="entry name" value="HATPase_c"/>
    <property type="match status" value="1"/>
</dbReference>
<dbReference type="SMART" id="SM00388">
    <property type="entry name" value="HisKA"/>
    <property type="match status" value="1"/>
</dbReference>
<dbReference type="SUPFAM" id="SSF55874">
    <property type="entry name" value="ATPase domain of HSP90 chaperone/DNA topoisomerase II/histidine kinase"/>
    <property type="match status" value="1"/>
</dbReference>
<dbReference type="SUPFAM" id="SSF47384">
    <property type="entry name" value="Homodimeric domain of signal transducing histidine kinase"/>
    <property type="match status" value="1"/>
</dbReference>
<dbReference type="SUPFAM" id="SSF103190">
    <property type="entry name" value="Sensory domain-like"/>
    <property type="match status" value="1"/>
</dbReference>
<dbReference type="PROSITE" id="PS50109">
    <property type="entry name" value="HIS_KIN"/>
    <property type="match status" value="1"/>
</dbReference>
<accession>Q8X614</accession>
<protein>
    <recommendedName>
        <fullName evidence="1">Sensor histidine kinase ZraS</fullName>
        <ecNumber evidence="1">2.7.13.3</ecNumber>
    </recommendedName>
</protein>
<sequence>MRFMQRSKDSLAKWLSAILPVVIVGLVGLFAVTVIRDYGRETAAARQTLLEKGSVLIRALESGSRVGMGMRMHHAQQQALLEEMAGQPGVRWFAVTDEQGTIVMHSNSGMVGKQLYSPQEMQQLHPGDEEVWRRIDSADGEPVLEIYRQFQPMFAAGMHRMRHMQQYAATPQAIFIAFDASNIVSAEDREQRNTLIILFALATVLLASVLSFFWYRRYLRSRQLLQDEMKRKEKLVALGHLAAGVAHEIRNPLSSIKGLAKYFAERAPAGGEAHQLAQVMAKEADRLNRVVSELLELVKPTHLALQAVDLNTLINHSLQLVSQDANCREIQLRFTANDTLPEIQADPDRLTQVLLNLYLNAIQAIGQHGVISVTASESGAGVKISVTDSGKGIAADQLEAIFTPYFTTKAEGTGLGLAVVHNIVEQHGGTIQVASLEGKGARFTLWLPVNITRKDPQG</sequence>
<feature type="chain" id="PRO_0000074910" description="Sensor histidine kinase ZraS">
    <location>
        <begin position="1"/>
        <end position="458"/>
    </location>
</feature>
<feature type="topological domain" description="Cytoplasmic" evidence="4">
    <location>
        <begin position="1"/>
        <end position="14"/>
    </location>
</feature>
<feature type="transmembrane region" description="Helical" evidence="2">
    <location>
        <begin position="15"/>
        <end position="35"/>
    </location>
</feature>
<feature type="topological domain" description="Periplasmic" evidence="4">
    <location>
        <begin position="36"/>
        <end position="194"/>
    </location>
</feature>
<feature type="transmembrane region" description="Helical" evidence="2">
    <location>
        <begin position="195"/>
        <end position="215"/>
    </location>
</feature>
<feature type="topological domain" description="Cytoplasmic" evidence="4">
    <location>
        <begin position="216"/>
        <end position="458"/>
    </location>
</feature>
<feature type="domain" description="Histidine kinase" evidence="3">
    <location>
        <begin position="244"/>
        <end position="451"/>
    </location>
</feature>
<feature type="modified residue" description="Phosphohistidine; by autocatalysis" evidence="3">
    <location>
        <position position="247"/>
    </location>
</feature>
<evidence type="ECO:0000250" key="1">
    <source>
        <dbReference type="UniProtKB" id="P14377"/>
    </source>
</evidence>
<evidence type="ECO:0000255" key="2"/>
<evidence type="ECO:0000255" key="3">
    <source>
        <dbReference type="PROSITE-ProRule" id="PRU00107"/>
    </source>
</evidence>
<evidence type="ECO:0000305" key="4"/>
<keyword id="KW-0067">ATP-binding</keyword>
<keyword id="KW-0997">Cell inner membrane</keyword>
<keyword id="KW-1003">Cell membrane</keyword>
<keyword id="KW-0418">Kinase</keyword>
<keyword id="KW-0472">Membrane</keyword>
<keyword id="KW-0547">Nucleotide-binding</keyword>
<keyword id="KW-0597">Phosphoprotein</keyword>
<keyword id="KW-1185">Reference proteome</keyword>
<keyword id="KW-0346">Stress response</keyword>
<keyword id="KW-0808">Transferase</keyword>
<keyword id="KW-0812">Transmembrane</keyword>
<keyword id="KW-1133">Transmembrane helix</keyword>
<keyword id="KW-0902">Two-component regulatory system</keyword>
<keyword id="KW-0862">Zinc</keyword>
<reference key="1">
    <citation type="journal article" date="2001" name="Nature">
        <title>Genome sequence of enterohaemorrhagic Escherichia coli O157:H7.</title>
        <authorList>
            <person name="Perna N.T."/>
            <person name="Plunkett G. III"/>
            <person name="Burland V."/>
            <person name="Mau B."/>
            <person name="Glasner J.D."/>
            <person name="Rose D.J."/>
            <person name="Mayhew G.F."/>
            <person name="Evans P.S."/>
            <person name="Gregor J."/>
            <person name="Kirkpatrick H.A."/>
            <person name="Posfai G."/>
            <person name="Hackett J."/>
            <person name="Klink S."/>
            <person name="Boutin A."/>
            <person name="Shao Y."/>
            <person name="Miller L."/>
            <person name="Grotbeck E.J."/>
            <person name="Davis N.W."/>
            <person name="Lim A."/>
            <person name="Dimalanta E.T."/>
            <person name="Potamousis K."/>
            <person name="Apodaca J."/>
            <person name="Anantharaman T.S."/>
            <person name="Lin J."/>
            <person name="Yen G."/>
            <person name="Schwartz D.C."/>
            <person name="Welch R.A."/>
            <person name="Blattner F.R."/>
        </authorList>
    </citation>
    <scope>NUCLEOTIDE SEQUENCE [LARGE SCALE GENOMIC DNA]</scope>
    <source>
        <strain>O157:H7 / EDL933 / ATCC 700927 / EHEC</strain>
    </source>
</reference>
<reference key="2">
    <citation type="journal article" date="2001" name="DNA Res.">
        <title>Complete genome sequence of enterohemorrhagic Escherichia coli O157:H7 and genomic comparison with a laboratory strain K-12.</title>
        <authorList>
            <person name="Hayashi T."/>
            <person name="Makino K."/>
            <person name="Ohnishi M."/>
            <person name="Kurokawa K."/>
            <person name="Ishii K."/>
            <person name="Yokoyama K."/>
            <person name="Han C.-G."/>
            <person name="Ohtsubo E."/>
            <person name="Nakayama K."/>
            <person name="Murata T."/>
            <person name="Tanaka M."/>
            <person name="Tobe T."/>
            <person name="Iida T."/>
            <person name="Takami H."/>
            <person name="Honda T."/>
            <person name="Sasakawa C."/>
            <person name="Ogasawara N."/>
            <person name="Yasunaga T."/>
            <person name="Kuhara S."/>
            <person name="Shiba T."/>
            <person name="Hattori M."/>
            <person name="Shinagawa H."/>
        </authorList>
    </citation>
    <scope>NUCLEOTIDE SEQUENCE [LARGE SCALE GENOMIC DNA]</scope>
    <source>
        <strain>O157:H7 / Sakai / RIMD 0509952 / EHEC</strain>
    </source>
</reference>
<proteinExistence type="inferred from homology"/>
<comment type="function">
    <text evidence="1">Part of the Zra signaling pathway, an envelope stress response (ESR) system composed of the periplasmic accessory protein ZraP, the histidine kinase ZraS and the transcriptional regulator ZraR. The ZraPSR system contributes to antibiotic resistance and is important for membrane integrity in the presence of membrane-targeting biocides. ZraS is a member of the two-component regulatory system ZraS/ZraR. Functions as a membrane-associated sensor kinase that phosphorylates ZraR in response to high concentrations of Zn(2+) or Pb(2+) in the medium.</text>
</comment>
<comment type="catalytic activity">
    <reaction evidence="1">
        <text>ATP + protein L-histidine = ADP + protein N-phospho-L-histidine.</text>
        <dbReference type="EC" id="2.7.13.3"/>
    </reaction>
</comment>
<comment type="activity regulation">
    <text evidence="1">Activity of the ZraS/ZraR two-component system is repressed by the zinc-bound form of ZraP, which probably interacts with the periplasmic region of ZraS.</text>
</comment>
<comment type="subcellular location">
    <subcellularLocation>
        <location evidence="1">Cell inner membrane</location>
        <topology evidence="2">Multi-pass membrane protein</topology>
    </subcellularLocation>
</comment>
<comment type="PTM">
    <text evidence="1">Autophosphorylated.</text>
</comment>
<gene>
    <name type="primary">zraS</name>
    <name type="synonym">hydH</name>
    <name type="ordered locus">Z5579</name>
    <name type="ordered locus">ECs4926</name>
</gene>
<organism>
    <name type="scientific">Escherichia coli O157:H7</name>
    <dbReference type="NCBI Taxonomy" id="83334"/>
    <lineage>
        <taxon>Bacteria</taxon>
        <taxon>Pseudomonadati</taxon>
        <taxon>Pseudomonadota</taxon>
        <taxon>Gammaproteobacteria</taxon>
        <taxon>Enterobacterales</taxon>
        <taxon>Enterobacteriaceae</taxon>
        <taxon>Escherichia</taxon>
    </lineage>
</organism>